<accession>O51351</accession>
<feature type="chain" id="PRO_0000157506" description="Large ribosomal subunit protein bL12">
    <location>
        <begin position="1"/>
        <end position="124"/>
    </location>
</feature>
<sequence length="124" mass="12904">MALNKEDILTWLEGAKTMEVVDLVTAIEEKFGVTAAVAAGVGGAVSVGSADSEEQTEFDVILMSFGDSKINVIKEVRAITGLGLGEAKALVEAAPKAIKEGLSKSDAEELKKKLEAVGAKVEVK</sequence>
<organism>
    <name type="scientific">Borreliella burgdorferi (strain ATCC 35210 / DSM 4680 / CIP 102532 / B31)</name>
    <name type="common">Borrelia burgdorferi</name>
    <dbReference type="NCBI Taxonomy" id="224326"/>
    <lineage>
        <taxon>Bacteria</taxon>
        <taxon>Pseudomonadati</taxon>
        <taxon>Spirochaetota</taxon>
        <taxon>Spirochaetia</taxon>
        <taxon>Spirochaetales</taxon>
        <taxon>Borreliaceae</taxon>
        <taxon>Borreliella</taxon>
    </lineage>
</organism>
<protein>
    <recommendedName>
        <fullName evidence="1">Large ribosomal subunit protein bL12</fullName>
    </recommendedName>
    <alternativeName>
        <fullName evidence="2">50S ribosomal protein L7/L12</fullName>
    </alternativeName>
</protein>
<keyword id="KW-1185">Reference proteome</keyword>
<keyword id="KW-0687">Ribonucleoprotein</keyword>
<keyword id="KW-0689">Ribosomal protein</keyword>
<gene>
    <name evidence="1" type="primary">rplL</name>
    <name type="ordered locus">BB_0390</name>
</gene>
<dbReference type="EMBL" id="AE000783">
    <property type="protein sequence ID" value="AAB91500.1"/>
    <property type="molecule type" value="Genomic_DNA"/>
</dbReference>
<dbReference type="PIR" id="E70148">
    <property type="entry name" value="E70148"/>
</dbReference>
<dbReference type="RefSeq" id="NP_212524.1">
    <property type="nucleotide sequence ID" value="NC_001318.1"/>
</dbReference>
<dbReference type="RefSeq" id="WP_010889742.1">
    <property type="nucleotide sequence ID" value="NC_001318.1"/>
</dbReference>
<dbReference type="SMR" id="O51351"/>
<dbReference type="STRING" id="224326.BB_0390"/>
<dbReference type="PaxDb" id="224326-BB_0390"/>
<dbReference type="EnsemblBacteria" id="AAB91500">
    <property type="protein sequence ID" value="AAB91500"/>
    <property type="gene ID" value="BB_0390"/>
</dbReference>
<dbReference type="KEGG" id="bbu:BB_0390"/>
<dbReference type="PATRIC" id="fig|224326.49.peg.785"/>
<dbReference type="HOGENOM" id="CLU_086499_3_2_12"/>
<dbReference type="OrthoDB" id="9811748at2"/>
<dbReference type="Proteomes" id="UP000001807">
    <property type="component" value="Chromosome"/>
</dbReference>
<dbReference type="GO" id="GO:0005829">
    <property type="term" value="C:cytosol"/>
    <property type="evidence" value="ECO:0000314"/>
    <property type="project" value="CAFA"/>
</dbReference>
<dbReference type="GO" id="GO:0022625">
    <property type="term" value="C:cytosolic large ribosomal subunit"/>
    <property type="evidence" value="ECO:0007669"/>
    <property type="project" value="TreeGrafter"/>
</dbReference>
<dbReference type="GO" id="GO:0003729">
    <property type="term" value="F:mRNA binding"/>
    <property type="evidence" value="ECO:0007669"/>
    <property type="project" value="TreeGrafter"/>
</dbReference>
<dbReference type="GO" id="GO:0003735">
    <property type="term" value="F:structural constituent of ribosome"/>
    <property type="evidence" value="ECO:0007669"/>
    <property type="project" value="InterPro"/>
</dbReference>
<dbReference type="GO" id="GO:0006412">
    <property type="term" value="P:translation"/>
    <property type="evidence" value="ECO:0007669"/>
    <property type="project" value="UniProtKB-UniRule"/>
</dbReference>
<dbReference type="CDD" id="cd00387">
    <property type="entry name" value="Ribosomal_L7_L12"/>
    <property type="match status" value="1"/>
</dbReference>
<dbReference type="FunFam" id="3.30.1390.10:FF:000001">
    <property type="entry name" value="50S ribosomal protein L7/L12"/>
    <property type="match status" value="1"/>
</dbReference>
<dbReference type="Gene3D" id="3.30.1390.10">
    <property type="match status" value="1"/>
</dbReference>
<dbReference type="Gene3D" id="1.20.5.710">
    <property type="entry name" value="Single helix bin"/>
    <property type="match status" value="1"/>
</dbReference>
<dbReference type="HAMAP" id="MF_00368">
    <property type="entry name" value="Ribosomal_bL12"/>
    <property type="match status" value="1"/>
</dbReference>
<dbReference type="InterPro" id="IPR000206">
    <property type="entry name" value="Ribosomal_bL12"/>
</dbReference>
<dbReference type="InterPro" id="IPR013823">
    <property type="entry name" value="Ribosomal_bL12_C"/>
</dbReference>
<dbReference type="InterPro" id="IPR014719">
    <property type="entry name" value="Ribosomal_bL12_C/ClpS-like"/>
</dbReference>
<dbReference type="InterPro" id="IPR008932">
    <property type="entry name" value="Ribosomal_bL12_oligo"/>
</dbReference>
<dbReference type="InterPro" id="IPR036235">
    <property type="entry name" value="Ribosomal_bL12_oligo_N_sf"/>
</dbReference>
<dbReference type="NCBIfam" id="TIGR00855">
    <property type="entry name" value="L12"/>
    <property type="match status" value="1"/>
</dbReference>
<dbReference type="PANTHER" id="PTHR45987">
    <property type="entry name" value="39S RIBOSOMAL PROTEIN L12"/>
    <property type="match status" value="1"/>
</dbReference>
<dbReference type="PANTHER" id="PTHR45987:SF4">
    <property type="entry name" value="LARGE RIBOSOMAL SUBUNIT PROTEIN BL12M"/>
    <property type="match status" value="1"/>
</dbReference>
<dbReference type="Pfam" id="PF00542">
    <property type="entry name" value="Ribosomal_L12"/>
    <property type="match status" value="1"/>
</dbReference>
<dbReference type="Pfam" id="PF16320">
    <property type="entry name" value="Ribosomal_L12_N"/>
    <property type="match status" value="1"/>
</dbReference>
<dbReference type="SUPFAM" id="SSF54736">
    <property type="entry name" value="ClpS-like"/>
    <property type="match status" value="1"/>
</dbReference>
<dbReference type="SUPFAM" id="SSF48300">
    <property type="entry name" value="Ribosomal protein L7/12, oligomerisation (N-terminal) domain"/>
    <property type="match status" value="1"/>
</dbReference>
<proteinExistence type="inferred from homology"/>
<evidence type="ECO:0000255" key="1">
    <source>
        <dbReference type="HAMAP-Rule" id="MF_00368"/>
    </source>
</evidence>
<evidence type="ECO:0000305" key="2"/>
<name>RL7_BORBU</name>
<comment type="function">
    <text evidence="1">Forms part of the ribosomal stalk which helps the ribosome interact with GTP-bound translation factors. Is thus essential for accurate translation.</text>
</comment>
<comment type="subunit">
    <text evidence="1">Homodimer. Part of the ribosomal stalk of the 50S ribosomal subunit. Forms a multimeric L10(L12)X complex, where L10 forms an elongated spine to which 2 to 4 L12 dimers bind in a sequential fashion. Binds GTP-bound translation factors.</text>
</comment>
<comment type="similarity">
    <text evidence="1">Belongs to the bacterial ribosomal protein bL12 family.</text>
</comment>
<reference key="1">
    <citation type="journal article" date="1997" name="Nature">
        <title>Genomic sequence of a Lyme disease spirochaete, Borrelia burgdorferi.</title>
        <authorList>
            <person name="Fraser C.M."/>
            <person name="Casjens S."/>
            <person name="Huang W.M."/>
            <person name="Sutton G.G."/>
            <person name="Clayton R.A."/>
            <person name="Lathigra R."/>
            <person name="White O."/>
            <person name="Ketchum K.A."/>
            <person name="Dodson R.J."/>
            <person name="Hickey E.K."/>
            <person name="Gwinn M.L."/>
            <person name="Dougherty B.A."/>
            <person name="Tomb J.-F."/>
            <person name="Fleischmann R.D."/>
            <person name="Richardson D.L."/>
            <person name="Peterson J.D."/>
            <person name="Kerlavage A.R."/>
            <person name="Quackenbush J."/>
            <person name="Salzberg S.L."/>
            <person name="Hanson M."/>
            <person name="van Vugt R."/>
            <person name="Palmer N."/>
            <person name="Adams M.D."/>
            <person name="Gocayne J.D."/>
            <person name="Weidman J.F."/>
            <person name="Utterback T.R."/>
            <person name="Watthey L."/>
            <person name="McDonald L.A."/>
            <person name="Artiach P."/>
            <person name="Bowman C."/>
            <person name="Garland S.A."/>
            <person name="Fujii C."/>
            <person name="Cotton M.D."/>
            <person name="Horst K."/>
            <person name="Roberts K.M."/>
            <person name="Hatch B."/>
            <person name="Smith H.O."/>
            <person name="Venter J.C."/>
        </authorList>
    </citation>
    <scope>NUCLEOTIDE SEQUENCE [LARGE SCALE GENOMIC DNA]</scope>
    <source>
        <strain>ATCC 35210 / DSM 4680 / CIP 102532 / B31</strain>
    </source>
</reference>